<reference key="1">
    <citation type="submission" date="2008-05" db="EMBL/GenBank/DDBJ databases">
        <title>Genome sequence of Clostridium botulinum Ba4 strain 657.</title>
        <authorList>
            <person name="Shrivastava S."/>
            <person name="Brown J.L."/>
            <person name="Bruce D."/>
            <person name="Detter C."/>
            <person name="Munk C."/>
            <person name="Smith L.A."/>
            <person name="Smith T.J."/>
            <person name="Sutton G."/>
            <person name="Brettin T.S."/>
        </authorList>
    </citation>
    <scope>NUCLEOTIDE SEQUENCE [LARGE SCALE GENOMIC DNA]</scope>
    <source>
        <strain>657 / Type Ba4</strain>
    </source>
</reference>
<accession>C3KVN3</accession>
<name>RL30_CLOB6</name>
<sequence>MAKVKITLVKSLIGRKKDQIATVNALGLKKIGNIVQHEETPQISGMIKKVSYLLKVEEA</sequence>
<proteinExistence type="inferred from homology"/>
<gene>
    <name evidence="1" type="primary">rpmD</name>
    <name type="ordered locus">CLJ_B3771</name>
</gene>
<keyword id="KW-0687">Ribonucleoprotein</keyword>
<keyword id="KW-0689">Ribosomal protein</keyword>
<feature type="chain" id="PRO_1000215052" description="Large ribosomal subunit protein uL30">
    <location>
        <begin position="1"/>
        <end position="59"/>
    </location>
</feature>
<organism>
    <name type="scientific">Clostridium botulinum (strain 657 / Type Ba4)</name>
    <dbReference type="NCBI Taxonomy" id="515621"/>
    <lineage>
        <taxon>Bacteria</taxon>
        <taxon>Bacillati</taxon>
        <taxon>Bacillota</taxon>
        <taxon>Clostridia</taxon>
        <taxon>Eubacteriales</taxon>
        <taxon>Clostridiaceae</taxon>
        <taxon>Clostridium</taxon>
    </lineage>
</organism>
<protein>
    <recommendedName>
        <fullName evidence="1">Large ribosomal subunit protein uL30</fullName>
    </recommendedName>
    <alternativeName>
        <fullName evidence="2">50S ribosomal protein L30</fullName>
    </alternativeName>
</protein>
<evidence type="ECO:0000255" key="1">
    <source>
        <dbReference type="HAMAP-Rule" id="MF_01371"/>
    </source>
</evidence>
<evidence type="ECO:0000305" key="2"/>
<dbReference type="EMBL" id="CP001083">
    <property type="protein sequence ID" value="ACQ54457.1"/>
    <property type="molecule type" value="Genomic_DNA"/>
</dbReference>
<dbReference type="RefSeq" id="WP_003360205.1">
    <property type="nucleotide sequence ID" value="NC_012658.1"/>
</dbReference>
<dbReference type="SMR" id="C3KVN3"/>
<dbReference type="KEGG" id="cbi:CLJ_B3771"/>
<dbReference type="HOGENOM" id="CLU_131047_2_1_9"/>
<dbReference type="Proteomes" id="UP000002333">
    <property type="component" value="Chromosome"/>
</dbReference>
<dbReference type="GO" id="GO:0022625">
    <property type="term" value="C:cytosolic large ribosomal subunit"/>
    <property type="evidence" value="ECO:0007669"/>
    <property type="project" value="TreeGrafter"/>
</dbReference>
<dbReference type="GO" id="GO:0003735">
    <property type="term" value="F:structural constituent of ribosome"/>
    <property type="evidence" value="ECO:0007669"/>
    <property type="project" value="InterPro"/>
</dbReference>
<dbReference type="GO" id="GO:0006412">
    <property type="term" value="P:translation"/>
    <property type="evidence" value="ECO:0007669"/>
    <property type="project" value="UniProtKB-UniRule"/>
</dbReference>
<dbReference type="CDD" id="cd01658">
    <property type="entry name" value="Ribosomal_L30"/>
    <property type="match status" value="1"/>
</dbReference>
<dbReference type="FunFam" id="3.30.1390.20:FF:000001">
    <property type="entry name" value="50S ribosomal protein L30"/>
    <property type="match status" value="1"/>
</dbReference>
<dbReference type="Gene3D" id="3.30.1390.20">
    <property type="entry name" value="Ribosomal protein L30, ferredoxin-like fold domain"/>
    <property type="match status" value="1"/>
</dbReference>
<dbReference type="HAMAP" id="MF_01371_B">
    <property type="entry name" value="Ribosomal_uL30_B"/>
    <property type="match status" value="1"/>
</dbReference>
<dbReference type="InterPro" id="IPR036919">
    <property type="entry name" value="Ribo_uL30_ferredoxin-like_sf"/>
</dbReference>
<dbReference type="InterPro" id="IPR005996">
    <property type="entry name" value="Ribosomal_uL30_bac-type"/>
</dbReference>
<dbReference type="InterPro" id="IPR016082">
    <property type="entry name" value="Ribosomal_uL30_ferredoxin-like"/>
</dbReference>
<dbReference type="NCBIfam" id="TIGR01308">
    <property type="entry name" value="rpmD_bact"/>
    <property type="match status" value="1"/>
</dbReference>
<dbReference type="PANTHER" id="PTHR15892:SF2">
    <property type="entry name" value="LARGE RIBOSOMAL SUBUNIT PROTEIN UL30M"/>
    <property type="match status" value="1"/>
</dbReference>
<dbReference type="PANTHER" id="PTHR15892">
    <property type="entry name" value="MITOCHONDRIAL RIBOSOMAL PROTEIN L30"/>
    <property type="match status" value="1"/>
</dbReference>
<dbReference type="Pfam" id="PF00327">
    <property type="entry name" value="Ribosomal_L30"/>
    <property type="match status" value="1"/>
</dbReference>
<dbReference type="PIRSF" id="PIRSF002211">
    <property type="entry name" value="Ribosomal_L30_bac-type"/>
    <property type="match status" value="1"/>
</dbReference>
<dbReference type="SUPFAM" id="SSF55129">
    <property type="entry name" value="Ribosomal protein L30p/L7e"/>
    <property type="match status" value="1"/>
</dbReference>
<comment type="subunit">
    <text evidence="1">Part of the 50S ribosomal subunit.</text>
</comment>
<comment type="similarity">
    <text evidence="1">Belongs to the universal ribosomal protein uL30 family.</text>
</comment>